<dbReference type="EC" id="2.6.1.9" evidence="1"/>
<dbReference type="EMBL" id="CP000151">
    <property type="protein sequence ID" value="ABB09729.1"/>
    <property type="molecule type" value="Genomic_DNA"/>
</dbReference>
<dbReference type="RefSeq" id="WP_011353237.1">
    <property type="nucleotide sequence ID" value="NC_007510.1"/>
</dbReference>
<dbReference type="SMR" id="Q39CT7"/>
<dbReference type="GeneID" id="45096017"/>
<dbReference type="KEGG" id="bur:Bcep18194_A6135"/>
<dbReference type="PATRIC" id="fig|482957.22.peg.3140"/>
<dbReference type="HOGENOM" id="CLU_017584_3_0_4"/>
<dbReference type="UniPathway" id="UPA00031">
    <property type="reaction ID" value="UER00012"/>
</dbReference>
<dbReference type="Proteomes" id="UP000002705">
    <property type="component" value="Chromosome 1"/>
</dbReference>
<dbReference type="GO" id="GO:0004400">
    <property type="term" value="F:histidinol-phosphate transaminase activity"/>
    <property type="evidence" value="ECO:0007669"/>
    <property type="project" value="UniProtKB-UniRule"/>
</dbReference>
<dbReference type="GO" id="GO:0030170">
    <property type="term" value="F:pyridoxal phosphate binding"/>
    <property type="evidence" value="ECO:0007669"/>
    <property type="project" value="InterPro"/>
</dbReference>
<dbReference type="GO" id="GO:0000105">
    <property type="term" value="P:L-histidine biosynthetic process"/>
    <property type="evidence" value="ECO:0007669"/>
    <property type="project" value="UniProtKB-UniRule"/>
</dbReference>
<dbReference type="CDD" id="cd00609">
    <property type="entry name" value="AAT_like"/>
    <property type="match status" value="1"/>
</dbReference>
<dbReference type="Gene3D" id="3.90.1150.10">
    <property type="entry name" value="Aspartate Aminotransferase, domain 1"/>
    <property type="match status" value="1"/>
</dbReference>
<dbReference type="Gene3D" id="3.40.640.10">
    <property type="entry name" value="Type I PLP-dependent aspartate aminotransferase-like (Major domain)"/>
    <property type="match status" value="1"/>
</dbReference>
<dbReference type="HAMAP" id="MF_01023">
    <property type="entry name" value="HisC_aminotrans_2"/>
    <property type="match status" value="1"/>
</dbReference>
<dbReference type="InterPro" id="IPR004839">
    <property type="entry name" value="Aminotransferase_I/II_large"/>
</dbReference>
<dbReference type="InterPro" id="IPR005861">
    <property type="entry name" value="HisP_aminotrans"/>
</dbReference>
<dbReference type="InterPro" id="IPR015424">
    <property type="entry name" value="PyrdxlP-dep_Trfase"/>
</dbReference>
<dbReference type="InterPro" id="IPR015421">
    <property type="entry name" value="PyrdxlP-dep_Trfase_major"/>
</dbReference>
<dbReference type="InterPro" id="IPR015422">
    <property type="entry name" value="PyrdxlP-dep_Trfase_small"/>
</dbReference>
<dbReference type="NCBIfam" id="TIGR01141">
    <property type="entry name" value="hisC"/>
    <property type="match status" value="1"/>
</dbReference>
<dbReference type="PANTHER" id="PTHR42885:SF2">
    <property type="entry name" value="HISTIDINOL-PHOSPHATE AMINOTRANSFERASE"/>
    <property type="match status" value="1"/>
</dbReference>
<dbReference type="PANTHER" id="PTHR42885">
    <property type="entry name" value="HISTIDINOL-PHOSPHATE AMINOTRANSFERASE-RELATED"/>
    <property type="match status" value="1"/>
</dbReference>
<dbReference type="Pfam" id="PF00155">
    <property type="entry name" value="Aminotran_1_2"/>
    <property type="match status" value="1"/>
</dbReference>
<dbReference type="SUPFAM" id="SSF53383">
    <property type="entry name" value="PLP-dependent transferases"/>
    <property type="match status" value="1"/>
</dbReference>
<organism>
    <name type="scientific">Burkholderia lata (strain ATCC 17760 / DSM 23089 / LMG 22485 / NCIMB 9086 / R18194 / 383)</name>
    <dbReference type="NCBI Taxonomy" id="482957"/>
    <lineage>
        <taxon>Bacteria</taxon>
        <taxon>Pseudomonadati</taxon>
        <taxon>Pseudomonadota</taxon>
        <taxon>Betaproteobacteria</taxon>
        <taxon>Burkholderiales</taxon>
        <taxon>Burkholderiaceae</taxon>
        <taxon>Burkholderia</taxon>
        <taxon>Burkholderia cepacia complex</taxon>
    </lineage>
</organism>
<name>HIS82_BURL3</name>
<evidence type="ECO:0000255" key="1">
    <source>
        <dbReference type="HAMAP-Rule" id="MF_01023"/>
    </source>
</evidence>
<protein>
    <recommendedName>
        <fullName evidence="1">Histidinol-phosphate aminotransferase 2</fullName>
        <ecNumber evidence="1">2.6.1.9</ecNumber>
    </recommendedName>
    <alternativeName>
        <fullName evidence="1">Imidazole acetol-phosphate transaminase 2</fullName>
    </alternativeName>
</protein>
<comment type="catalytic activity">
    <reaction evidence="1">
        <text>L-histidinol phosphate + 2-oxoglutarate = 3-(imidazol-4-yl)-2-oxopropyl phosphate + L-glutamate</text>
        <dbReference type="Rhea" id="RHEA:23744"/>
        <dbReference type="ChEBI" id="CHEBI:16810"/>
        <dbReference type="ChEBI" id="CHEBI:29985"/>
        <dbReference type="ChEBI" id="CHEBI:57766"/>
        <dbReference type="ChEBI" id="CHEBI:57980"/>
        <dbReference type="EC" id="2.6.1.9"/>
    </reaction>
</comment>
<comment type="cofactor">
    <cofactor evidence="1">
        <name>pyridoxal 5'-phosphate</name>
        <dbReference type="ChEBI" id="CHEBI:597326"/>
    </cofactor>
</comment>
<comment type="pathway">
    <text evidence="1">Amino-acid biosynthesis; L-histidine biosynthesis; L-histidine from 5-phospho-alpha-D-ribose 1-diphosphate: step 7/9.</text>
</comment>
<comment type="subunit">
    <text evidence="1">Homodimer.</text>
</comment>
<comment type="similarity">
    <text evidence="1">Belongs to the class-II pyridoxal-phosphate-dependent aminotransferase family. Histidinol-phosphate aminotransferase subfamily.</text>
</comment>
<proteinExistence type="inferred from homology"/>
<sequence>MSRYWSDIVQQLVPYVPGEQPALAHPVKLNTNENPYPPSPRVVAAIARELGETGDTLRRYPDPVARALRETVATHHRIKPEQVFVGNGSDEVLAHTFQALLKHDRPLRFPDITYSFYPTYARLYGVQTSNVPLADDFSIRVDDYLDDAGGVLFPNPNAPTGRALPLADVERIVAANPSSVVVIDEAYVDFGAQSAITLIDRYPNLLVVHTTSKARSLAGMRVGFAFGEAALIDALNRVKDSFNSYPLDRLAQVAAQAAYEDTDYFNATCRRVIDSRTRLTHALDALDFNIVPSAANFVFARHPAHDAGAIAAKLKEREIFVRHFRLPRIDQHLRITVGTDAECDALVAALRELLA</sequence>
<feature type="chain" id="PRO_0000230209" description="Histidinol-phosphate aminotransferase 2">
    <location>
        <begin position="1"/>
        <end position="355"/>
    </location>
</feature>
<feature type="modified residue" description="N6-(pyridoxal phosphate)lysine" evidence="1">
    <location>
        <position position="213"/>
    </location>
</feature>
<reference key="1">
    <citation type="submission" date="2005-10" db="EMBL/GenBank/DDBJ databases">
        <title>Complete sequence of chromosome 1 of Burkholderia sp. 383.</title>
        <authorList>
            <consortium name="US DOE Joint Genome Institute"/>
            <person name="Copeland A."/>
            <person name="Lucas S."/>
            <person name="Lapidus A."/>
            <person name="Barry K."/>
            <person name="Detter J.C."/>
            <person name="Glavina T."/>
            <person name="Hammon N."/>
            <person name="Israni S."/>
            <person name="Pitluck S."/>
            <person name="Chain P."/>
            <person name="Malfatti S."/>
            <person name="Shin M."/>
            <person name="Vergez L."/>
            <person name="Schmutz J."/>
            <person name="Larimer F."/>
            <person name="Land M."/>
            <person name="Kyrpides N."/>
            <person name="Lykidis A."/>
            <person name="Richardson P."/>
        </authorList>
    </citation>
    <scope>NUCLEOTIDE SEQUENCE [LARGE SCALE GENOMIC DNA]</scope>
    <source>
        <strain>ATCC 17760 / DSM 23089 / LMG 22485 / NCIMB 9086 / R18194 / 383</strain>
    </source>
</reference>
<gene>
    <name evidence="1" type="primary">hisC2</name>
    <name type="ordered locus">Bcep18194_A6135</name>
</gene>
<keyword id="KW-0028">Amino-acid biosynthesis</keyword>
<keyword id="KW-0032">Aminotransferase</keyword>
<keyword id="KW-0368">Histidine biosynthesis</keyword>
<keyword id="KW-0663">Pyridoxal phosphate</keyword>
<keyword id="KW-0808">Transferase</keyword>
<accession>Q39CT7</accession>